<feature type="chain" id="PRO_0000213257" description="Omega-amidase YafV">
    <location>
        <begin position="1"/>
        <end position="256"/>
    </location>
</feature>
<feature type="domain" description="CN hydrolase" evidence="2">
    <location>
        <begin position="4"/>
        <end position="234"/>
    </location>
</feature>
<feature type="active site" description="Proton acceptor" evidence="2">
    <location>
        <position position="42"/>
    </location>
</feature>
<feature type="active site" description="Proton donor" evidence="2">
    <location>
        <position position="107"/>
    </location>
</feature>
<feature type="active site" description="Nucleophile" evidence="2">
    <location>
        <position position="141"/>
    </location>
</feature>
<accession>Q47679</accession>
<accession>Q9R2E1</accession>
<comment type="function">
    <text evidence="1">Hydrolyzes alpha-ketoglutaramate (a-KGM) to alpha-ketoglutarate (alpha-KG) and ammonia, has weak activity on L-glutamine, almost no activity on deaminated glutathione (dGSH) and none on glutathione (By similarity). May function as a metabolite repair enzyme (By similarity).</text>
</comment>
<comment type="catalytic activity">
    <reaction evidence="1">
        <text>a monoamide of a dicarboxylate + H2O = a dicarboxylate + NH4(+)</text>
        <dbReference type="Rhea" id="RHEA:11716"/>
        <dbReference type="ChEBI" id="CHEBI:15377"/>
        <dbReference type="ChEBI" id="CHEBI:28938"/>
        <dbReference type="ChEBI" id="CHEBI:28965"/>
        <dbReference type="ChEBI" id="CHEBI:77450"/>
        <dbReference type="EC" id="3.5.1.3"/>
    </reaction>
</comment>
<comment type="similarity">
    <text evidence="3">Belongs to the carbon-nitrogen hydrolase superfamily. NIT1/NIT2 family.</text>
</comment>
<organism>
    <name type="scientific">Escherichia coli (strain K12)</name>
    <dbReference type="NCBI Taxonomy" id="83333"/>
    <lineage>
        <taxon>Bacteria</taxon>
        <taxon>Pseudomonadati</taxon>
        <taxon>Pseudomonadota</taxon>
        <taxon>Gammaproteobacteria</taxon>
        <taxon>Enterobacterales</taxon>
        <taxon>Enterobacteriaceae</taxon>
        <taxon>Escherichia</taxon>
    </lineage>
</organism>
<protein>
    <recommendedName>
        <fullName>Omega-amidase YafV</fullName>
        <ecNumber evidence="1">3.5.1.3</ecNumber>
    </recommendedName>
</protein>
<reference key="1">
    <citation type="submission" date="1996-02" db="EMBL/GenBank/DDBJ databases">
        <title>Systematic sequencing of the Escherichia coli genome: analysis of the 4.0 - 6.0 min (189,987 - 281,416bp) region.</title>
        <authorList>
            <person name="Takemoto K."/>
            <person name="Mori H."/>
            <person name="Murayama N."/>
            <person name="Kataoka K."/>
            <person name="Yano M."/>
            <person name="Itoh T."/>
            <person name="Yamamoto Y."/>
            <person name="Inokuchi H."/>
            <person name="Miki T."/>
            <person name="Hatada E."/>
            <person name="Fukuda R."/>
            <person name="Ichihara S."/>
            <person name="Mizuno T."/>
            <person name="Makino K."/>
            <person name="Nakata A."/>
            <person name="Yura T."/>
            <person name="Sampei G."/>
            <person name="Mizobuchi K."/>
        </authorList>
    </citation>
    <scope>NUCLEOTIDE SEQUENCE [LARGE SCALE GENOMIC DNA]</scope>
    <source>
        <strain>K12 / W3110 / ATCC 27325 / DSM 5911</strain>
    </source>
</reference>
<reference key="2">
    <citation type="submission" date="1997-01" db="EMBL/GenBank/DDBJ databases">
        <title>Sequence of minutes 4-25 of Escherichia coli.</title>
        <authorList>
            <person name="Chung E."/>
            <person name="Allen E."/>
            <person name="Araujo R."/>
            <person name="Aparicio A.M."/>
            <person name="Davis K."/>
            <person name="Duncan M."/>
            <person name="Federspiel N."/>
            <person name="Hyman R."/>
            <person name="Kalman S."/>
            <person name="Komp C."/>
            <person name="Kurdi O."/>
            <person name="Lew H."/>
            <person name="Lin D."/>
            <person name="Namath A."/>
            <person name="Oefner P."/>
            <person name="Roberts D."/>
            <person name="Schramm S."/>
            <person name="Davis R.W."/>
        </authorList>
    </citation>
    <scope>NUCLEOTIDE SEQUENCE [LARGE SCALE GENOMIC DNA]</scope>
    <source>
        <strain>K12 / MG1655 / ATCC 47076</strain>
    </source>
</reference>
<reference key="3">
    <citation type="journal article" date="1997" name="Science">
        <title>The complete genome sequence of Escherichia coli K-12.</title>
        <authorList>
            <person name="Blattner F.R."/>
            <person name="Plunkett G. III"/>
            <person name="Bloch C.A."/>
            <person name="Perna N.T."/>
            <person name="Burland V."/>
            <person name="Riley M."/>
            <person name="Collado-Vides J."/>
            <person name="Glasner J.D."/>
            <person name="Rode C.K."/>
            <person name="Mayhew G.F."/>
            <person name="Gregor J."/>
            <person name="Davis N.W."/>
            <person name="Kirkpatrick H.A."/>
            <person name="Goeden M.A."/>
            <person name="Rose D.J."/>
            <person name="Mau B."/>
            <person name="Shao Y."/>
        </authorList>
    </citation>
    <scope>NUCLEOTIDE SEQUENCE [LARGE SCALE GENOMIC DNA]</scope>
    <source>
        <strain>K12 / MG1655 / ATCC 47076</strain>
    </source>
</reference>
<reference key="4">
    <citation type="journal article" date="2006" name="Mol. Syst. Biol.">
        <title>Highly accurate genome sequences of Escherichia coli K-12 strains MG1655 and W3110.</title>
        <authorList>
            <person name="Hayashi K."/>
            <person name="Morooka N."/>
            <person name="Yamamoto Y."/>
            <person name="Fujita K."/>
            <person name="Isono K."/>
            <person name="Choi S."/>
            <person name="Ohtsubo E."/>
            <person name="Baba T."/>
            <person name="Wanner B.L."/>
            <person name="Mori H."/>
            <person name="Horiuchi T."/>
        </authorList>
    </citation>
    <scope>NUCLEOTIDE SEQUENCE [LARGE SCALE GENOMIC DNA]</scope>
    <source>
        <strain>K12 / W3110 / ATCC 27325 / DSM 5911</strain>
    </source>
</reference>
<name>YAFV_ECOLI</name>
<keyword id="KW-0378">Hydrolase</keyword>
<keyword id="KW-1185">Reference proteome</keyword>
<sequence>MPGLKITLLQQPLVWMDGPANLRHFDRQLEGITGRDVIVLPEMFTSGFAMEAAASSLAQDDVVNWMTAKAQQCNALIAGSVALQTESGSVNRFLLVEPGGTVHFYDKRHLFRMADEHLHYKAGNARVIVEWRGWRILPLVCYDLRFPVWSRNLNDYDLALYVANWPAPRSLHWQALLTARAIENQAYVAGCNRVGSDGNGCHYRGDSRVINPQGEIIATADAHQATRIDAELSMAALREYREKFPAWQDADEFRLW</sequence>
<gene>
    <name type="primary">yafV</name>
    <name type="ordered locus">b0219</name>
    <name type="ordered locus">JW5019</name>
</gene>
<dbReference type="EC" id="3.5.1.3" evidence="1"/>
<dbReference type="EMBL" id="U70214">
    <property type="protein sequence ID" value="AAB08641.1"/>
    <property type="molecule type" value="Genomic_DNA"/>
</dbReference>
<dbReference type="EMBL" id="U00096">
    <property type="protein sequence ID" value="AAC73323.1"/>
    <property type="molecule type" value="Genomic_DNA"/>
</dbReference>
<dbReference type="EMBL" id="AP009048">
    <property type="protein sequence ID" value="BAA77889.2"/>
    <property type="molecule type" value="Genomic_DNA"/>
</dbReference>
<dbReference type="PIR" id="D64746">
    <property type="entry name" value="D64746"/>
</dbReference>
<dbReference type="RefSeq" id="NP_414754.1">
    <property type="nucleotide sequence ID" value="NC_000913.3"/>
</dbReference>
<dbReference type="RefSeq" id="WP_001118036.1">
    <property type="nucleotide sequence ID" value="NZ_SSZK01000029.1"/>
</dbReference>
<dbReference type="SMR" id="Q47679"/>
<dbReference type="BioGRID" id="4261824">
    <property type="interactions" value="21"/>
</dbReference>
<dbReference type="DIP" id="DIP-11225N"/>
<dbReference type="FunCoup" id="Q47679">
    <property type="interactions" value="176"/>
</dbReference>
<dbReference type="STRING" id="511145.b0219"/>
<dbReference type="jPOST" id="Q47679"/>
<dbReference type="PaxDb" id="511145-b0219"/>
<dbReference type="EnsemblBacteria" id="AAC73323">
    <property type="protein sequence ID" value="AAC73323"/>
    <property type="gene ID" value="b0219"/>
</dbReference>
<dbReference type="GeneID" id="946585"/>
<dbReference type="KEGG" id="ecj:JW5019"/>
<dbReference type="KEGG" id="eco:b0219"/>
<dbReference type="KEGG" id="ecoc:C3026_01035"/>
<dbReference type="PATRIC" id="fig|1411691.4.peg.2064"/>
<dbReference type="EchoBASE" id="EB3118"/>
<dbReference type="eggNOG" id="COG0388">
    <property type="taxonomic scope" value="Bacteria"/>
</dbReference>
<dbReference type="HOGENOM" id="CLU_030130_3_7_6"/>
<dbReference type="InParanoid" id="Q47679"/>
<dbReference type="OMA" id="KIHRFGF"/>
<dbReference type="OrthoDB" id="9811121at2"/>
<dbReference type="PhylomeDB" id="Q47679"/>
<dbReference type="BioCyc" id="EcoCyc:G6103-MONOMER"/>
<dbReference type="BioCyc" id="MetaCyc:G6103-MONOMER"/>
<dbReference type="PRO" id="PR:Q47679"/>
<dbReference type="Proteomes" id="UP000000625">
    <property type="component" value="Chromosome"/>
</dbReference>
<dbReference type="GO" id="GO:0106008">
    <property type="term" value="F:2-oxoglutaramate amidase activity"/>
    <property type="evidence" value="ECO:0000314"/>
    <property type="project" value="EcoCyc"/>
</dbReference>
<dbReference type="GO" id="GO:0050152">
    <property type="term" value="F:omega-amidase activity"/>
    <property type="evidence" value="ECO:0000314"/>
    <property type="project" value="EcoCyc"/>
</dbReference>
<dbReference type="CDD" id="cd07575">
    <property type="entry name" value="Xc-1258_like"/>
    <property type="match status" value="1"/>
</dbReference>
<dbReference type="FunFam" id="3.60.110.10:FF:000004">
    <property type="entry name" value="Carbon-nitrogen hydrolase"/>
    <property type="match status" value="1"/>
</dbReference>
<dbReference type="Gene3D" id="3.60.110.10">
    <property type="entry name" value="Carbon-nitrogen hydrolase"/>
    <property type="match status" value="1"/>
</dbReference>
<dbReference type="InterPro" id="IPR003010">
    <property type="entry name" value="C-N_Hydrolase"/>
</dbReference>
<dbReference type="InterPro" id="IPR036526">
    <property type="entry name" value="C-N_Hydrolase_sf"/>
</dbReference>
<dbReference type="InterPro" id="IPR052737">
    <property type="entry name" value="Omega-amidase_YafV"/>
</dbReference>
<dbReference type="InterPro" id="IPR001110">
    <property type="entry name" value="UPF0012_CS"/>
</dbReference>
<dbReference type="NCBIfam" id="NF007757">
    <property type="entry name" value="PRK10438.1"/>
    <property type="match status" value="1"/>
</dbReference>
<dbReference type="PANTHER" id="PTHR47799">
    <property type="entry name" value="OMEGA-AMIDASE YAFV"/>
    <property type="match status" value="1"/>
</dbReference>
<dbReference type="PANTHER" id="PTHR47799:SF1">
    <property type="entry name" value="OMEGA-AMIDASE YAFV"/>
    <property type="match status" value="1"/>
</dbReference>
<dbReference type="Pfam" id="PF00795">
    <property type="entry name" value="CN_hydrolase"/>
    <property type="match status" value="1"/>
</dbReference>
<dbReference type="SUPFAM" id="SSF56317">
    <property type="entry name" value="Carbon-nitrogen hydrolase"/>
    <property type="match status" value="1"/>
</dbReference>
<dbReference type="PROSITE" id="PS50263">
    <property type="entry name" value="CN_HYDROLASE"/>
    <property type="match status" value="1"/>
</dbReference>
<dbReference type="PROSITE" id="PS01227">
    <property type="entry name" value="UPF0012"/>
    <property type="match status" value="1"/>
</dbReference>
<evidence type="ECO:0000250" key="1">
    <source>
        <dbReference type="UniProtKB" id="A0A140NDS5"/>
    </source>
</evidence>
<evidence type="ECO:0000255" key="2">
    <source>
        <dbReference type="PROSITE-ProRule" id="PRU00054"/>
    </source>
</evidence>
<evidence type="ECO:0000305" key="3"/>
<proteinExistence type="inferred from homology"/>